<feature type="chain" id="PRO_0000050550" description="Bleomycin hydrolase">
    <location>
        <begin position="1"/>
        <end position="455"/>
    </location>
</feature>
<feature type="active site">
    <location>
        <position position="73"/>
    </location>
</feature>
<feature type="active site">
    <location>
        <position position="372"/>
    </location>
</feature>
<feature type="active site">
    <location>
        <position position="396"/>
    </location>
</feature>
<feature type="modified residue" description="N-acetylmethionine" evidence="2">
    <location>
        <position position="1"/>
    </location>
</feature>
<feature type="modified residue" description="N6-acetyllysine" evidence="7">
    <location>
        <position position="391"/>
    </location>
</feature>
<feature type="sequence variant" id="VAR_010896" description="In dbSNP:rs1050565." evidence="5 6">
    <original>I</original>
    <variation>V</variation>
    <location>
        <position position="443"/>
    </location>
</feature>
<feature type="strand" evidence="8">
    <location>
        <begin position="4"/>
        <end position="6"/>
    </location>
</feature>
<feature type="helix" evidence="9">
    <location>
        <begin position="8"/>
        <end position="19"/>
    </location>
</feature>
<feature type="helix" evidence="9">
    <location>
        <begin position="22"/>
        <end position="31"/>
    </location>
</feature>
<feature type="helix" evidence="9">
    <location>
        <begin position="36"/>
        <end position="40"/>
    </location>
</feature>
<feature type="helix" evidence="9">
    <location>
        <begin position="43"/>
        <end position="47"/>
    </location>
</feature>
<feature type="strand" evidence="9">
    <location>
        <begin position="54"/>
        <end position="56"/>
    </location>
</feature>
<feature type="strand" evidence="9">
    <location>
        <begin position="69"/>
        <end position="71"/>
    </location>
</feature>
<feature type="helix" evidence="9">
    <location>
        <begin position="73"/>
        <end position="90"/>
    </location>
</feature>
<feature type="helix" evidence="9">
    <location>
        <begin position="99"/>
        <end position="123"/>
    </location>
</feature>
<feature type="helix" evidence="9">
    <location>
        <begin position="131"/>
        <end position="138"/>
    </location>
</feature>
<feature type="helix" evidence="9">
    <location>
        <begin position="147"/>
        <end position="157"/>
    </location>
</feature>
<feature type="helix" evidence="9">
    <location>
        <begin position="162"/>
        <end position="164"/>
    </location>
</feature>
<feature type="turn" evidence="9">
    <location>
        <begin position="169"/>
        <end position="172"/>
    </location>
</feature>
<feature type="helix" evidence="9">
    <location>
        <begin position="175"/>
        <end position="197"/>
    </location>
</feature>
<feature type="helix" evidence="9">
    <location>
        <begin position="202"/>
        <end position="224"/>
    </location>
</feature>
<feature type="strand" evidence="9">
    <location>
        <begin position="229"/>
        <end position="236"/>
    </location>
</feature>
<feature type="strand" evidence="9">
    <location>
        <begin position="242"/>
        <end position="248"/>
    </location>
</feature>
<feature type="helix" evidence="9">
    <location>
        <begin position="250"/>
        <end position="257"/>
    </location>
</feature>
<feature type="turn" evidence="9">
    <location>
        <begin position="258"/>
        <end position="261"/>
    </location>
</feature>
<feature type="helix" evidence="9">
    <location>
        <begin position="264"/>
        <end position="266"/>
    </location>
</feature>
<feature type="strand" evidence="9">
    <location>
        <begin position="267"/>
        <end position="271"/>
    </location>
</feature>
<feature type="strand" evidence="9">
    <location>
        <begin position="280"/>
        <end position="286"/>
    </location>
</feature>
<feature type="strand" evidence="9">
    <location>
        <begin position="300"/>
        <end position="302"/>
    </location>
</feature>
<feature type="helix" evidence="9">
    <location>
        <begin position="305"/>
        <end position="317"/>
    </location>
</feature>
<feature type="strand" evidence="9">
    <location>
        <begin position="322"/>
        <end position="326"/>
    </location>
</feature>
<feature type="turn" evidence="9">
    <location>
        <begin position="328"/>
        <end position="331"/>
    </location>
</feature>
<feature type="turn" evidence="9">
    <location>
        <begin position="334"/>
        <end position="337"/>
    </location>
</feature>
<feature type="helix" evidence="11">
    <location>
        <begin position="341"/>
        <end position="343"/>
    </location>
</feature>
<feature type="helix" evidence="9">
    <location>
        <begin position="346"/>
        <end position="350"/>
    </location>
</feature>
<feature type="helix" evidence="9">
    <location>
        <begin position="359"/>
        <end position="364"/>
    </location>
</feature>
<feature type="strand" evidence="9">
    <location>
        <begin position="372"/>
        <end position="381"/>
    </location>
</feature>
<feature type="strand" evidence="10">
    <location>
        <begin position="383"/>
        <end position="385"/>
    </location>
</feature>
<feature type="strand" evidence="9">
    <location>
        <begin position="389"/>
        <end position="395"/>
    </location>
</feature>
<feature type="strand" evidence="9">
    <location>
        <begin position="400"/>
        <end position="402"/>
    </location>
</feature>
<feature type="strand" evidence="9">
    <location>
        <begin position="407"/>
        <end position="411"/>
    </location>
</feature>
<feature type="helix" evidence="9">
    <location>
        <begin position="412"/>
        <end position="418"/>
    </location>
</feature>
<feature type="strand" evidence="9">
    <location>
        <begin position="419"/>
        <end position="425"/>
    </location>
</feature>
<feature type="helix" evidence="9">
    <location>
        <begin position="426"/>
        <end position="428"/>
    </location>
</feature>
<feature type="helix" evidence="9">
    <location>
        <begin position="431"/>
        <end position="434"/>
    </location>
</feature>
<feature type="helix" evidence="9">
    <location>
        <begin position="435"/>
        <end position="438"/>
    </location>
</feature>
<feature type="strand" evidence="9">
    <location>
        <begin position="442"/>
        <end position="444"/>
    </location>
</feature>
<feature type="helix" evidence="9">
    <location>
        <begin position="449"/>
        <end position="451"/>
    </location>
</feature>
<sequence>MSSSGLNSEKVAALIQKLNSDPQFVLAQNVGTTHDLLDICLKRATVQRAQHVFQHAVPQEGKPITNQKSSGRCWIFSCLNVMRLPFMKKLNIEEFEFSQSYLFFWDKVERCYFFLSAFVDTAQRKEPEDGRLVQFLLMNPANDGGQWDMLVNIVEKYGVIPKKCFPESYTTEATRRMNDILNHKMREFCIRLRNLVHSGATKGEISATQDVMMEEIFRVVCICLGNPPETFTWEYRDKDKNYQKIGPITPLEFYREHVKPLFNMEDKICLVNDPRPQHKYNKLYTVEYLSNMVGGRKTLYNNQPIDFLKKMVAASIKDGEAVWFGCDVGKHFNSKLGLSDMNLYDHELVFGVSLKNMNKAERLTFGESLMTHAMTFTAVSEKDDQDGAFTKWRVENSWGEDHGHKGYLCMTDEWFSEYVYEVVVDRKHVPEEVLAVLEQEPIILPAWDPMGALAE</sequence>
<accession>Q13867</accession>
<accession>B2R796</accession>
<accession>Q53F86</accession>
<accession>Q9UER9</accession>
<reference key="1">
    <citation type="journal article" date="1996" name="Cancer Res.">
        <title>Cloning and expression analysis of human bleomycin hydrolase, a cysteine proteinase involved in chemotherapy resistance.</title>
        <authorList>
            <person name="Ferrando A.A."/>
            <person name="Velasco G."/>
            <person name="Campo E."/>
            <person name="Lopez-Otin C."/>
        </authorList>
    </citation>
    <scope>NUCLEOTIDE SEQUENCE [MRNA]</scope>
    <source>
        <tissue>Brain</tissue>
    </source>
</reference>
<reference key="2">
    <citation type="journal article" date="1996" name="Biochemistry">
        <title>Human bleomycin hydrolase: molecular cloning, sequencing, functional expression, and enzymatic characterization.</title>
        <authorList>
            <person name="Broemme D."/>
            <person name="Rossi A.B."/>
            <person name="Smeekens S.P."/>
            <person name="Anderson D.C."/>
            <person name="Payan D.G."/>
        </authorList>
    </citation>
    <scope>NUCLEOTIDE SEQUENCE [MRNA]</scope>
    <scope>PARTIAL PROTEIN SEQUENCE</scope>
    <scope>VARIANT VAL-443</scope>
    <source>
        <tissue>Lung</tissue>
    </source>
</reference>
<reference key="3">
    <citation type="submission" date="2004-10" db="EMBL/GenBank/DDBJ databases">
        <title>Cloning of human full-length CDSs in BD Creator(TM) system donor vector.</title>
        <authorList>
            <person name="Kalnine N."/>
            <person name="Chen X."/>
            <person name="Rolfs A."/>
            <person name="Halleck A."/>
            <person name="Hines L."/>
            <person name="Eisenstein S."/>
            <person name="Koundinya M."/>
            <person name="Raphael J."/>
            <person name="Moreira D."/>
            <person name="Kelley T."/>
            <person name="LaBaer J."/>
            <person name="Lin Y."/>
            <person name="Phelan M."/>
            <person name="Farmer A."/>
        </authorList>
    </citation>
    <scope>NUCLEOTIDE SEQUENCE [LARGE SCALE MRNA]</scope>
</reference>
<reference key="4">
    <citation type="journal article" date="2004" name="Nat. Genet.">
        <title>Complete sequencing and characterization of 21,243 full-length human cDNAs.</title>
        <authorList>
            <person name="Ota T."/>
            <person name="Suzuki Y."/>
            <person name="Nishikawa T."/>
            <person name="Otsuki T."/>
            <person name="Sugiyama T."/>
            <person name="Irie R."/>
            <person name="Wakamatsu A."/>
            <person name="Hayashi K."/>
            <person name="Sato H."/>
            <person name="Nagai K."/>
            <person name="Kimura K."/>
            <person name="Makita H."/>
            <person name="Sekine M."/>
            <person name="Obayashi M."/>
            <person name="Nishi T."/>
            <person name="Shibahara T."/>
            <person name="Tanaka T."/>
            <person name="Ishii S."/>
            <person name="Yamamoto J."/>
            <person name="Saito K."/>
            <person name="Kawai Y."/>
            <person name="Isono Y."/>
            <person name="Nakamura Y."/>
            <person name="Nagahari K."/>
            <person name="Murakami K."/>
            <person name="Yasuda T."/>
            <person name="Iwayanagi T."/>
            <person name="Wagatsuma M."/>
            <person name="Shiratori A."/>
            <person name="Sudo H."/>
            <person name="Hosoiri T."/>
            <person name="Kaku Y."/>
            <person name="Kodaira H."/>
            <person name="Kondo H."/>
            <person name="Sugawara M."/>
            <person name="Takahashi M."/>
            <person name="Kanda K."/>
            <person name="Yokoi T."/>
            <person name="Furuya T."/>
            <person name="Kikkawa E."/>
            <person name="Omura Y."/>
            <person name="Abe K."/>
            <person name="Kamihara K."/>
            <person name="Katsuta N."/>
            <person name="Sato K."/>
            <person name="Tanikawa M."/>
            <person name="Yamazaki M."/>
            <person name="Ninomiya K."/>
            <person name="Ishibashi T."/>
            <person name="Yamashita H."/>
            <person name="Murakawa K."/>
            <person name="Fujimori K."/>
            <person name="Tanai H."/>
            <person name="Kimata M."/>
            <person name="Watanabe M."/>
            <person name="Hiraoka S."/>
            <person name="Chiba Y."/>
            <person name="Ishida S."/>
            <person name="Ono Y."/>
            <person name="Takiguchi S."/>
            <person name="Watanabe S."/>
            <person name="Yosida M."/>
            <person name="Hotuta T."/>
            <person name="Kusano J."/>
            <person name="Kanehori K."/>
            <person name="Takahashi-Fujii A."/>
            <person name="Hara H."/>
            <person name="Tanase T.-O."/>
            <person name="Nomura Y."/>
            <person name="Togiya S."/>
            <person name="Komai F."/>
            <person name="Hara R."/>
            <person name="Takeuchi K."/>
            <person name="Arita M."/>
            <person name="Imose N."/>
            <person name="Musashino K."/>
            <person name="Yuuki H."/>
            <person name="Oshima A."/>
            <person name="Sasaki N."/>
            <person name="Aotsuka S."/>
            <person name="Yoshikawa Y."/>
            <person name="Matsunawa H."/>
            <person name="Ichihara T."/>
            <person name="Shiohata N."/>
            <person name="Sano S."/>
            <person name="Moriya S."/>
            <person name="Momiyama H."/>
            <person name="Satoh N."/>
            <person name="Takami S."/>
            <person name="Terashima Y."/>
            <person name="Suzuki O."/>
            <person name="Nakagawa S."/>
            <person name="Senoh A."/>
            <person name="Mizoguchi H."/>
            <person name="Goto Y."/>
            <person name="Shimizu F."/>
            <person name="Wakebe H."/>
            <person name="Hishigaki H."/>
            <person name="Watanabe T."/>
            <person name="Sugiyama A."/>
            <person name="Takemoto M."/>
            <person name="Kawakami B."/>
            <person name="Yamazaki M."/>
            <person name="Watanabe K."/>
            <person name="Kumagai A."/>
            <person name="Itakura S."/>
            <person name="Fukuzumi Y."/>
            <person name="Fujimori Y."/>
            <person name="Komiyama M."/>
            <person name="Tashiro H."/>
            <person name="Tanigami A."/>
            <person name="Fujiwara T."/>
            <person name="Ono T."/>
            <person name="Yamada K."/>
            <person name="Fujii Y."/>
            <person name="Ozaki K."/>
            <person name="Hirao M."/>
            <person name="Ohmori Y."/>
            <person name="Kawabata A."/>
            <person name="Hikiji T."/>
            <person name="Kobatake N."/>
            <person name="Inagaki H."/>
            <person name="Ikema Y."/>
            <person name="Okamoto S."/>
            <person name="Okitani R."/>
            <person name="Kawakami T."/>
            <person name="Noguchi S."/>
            <person name="Itoh T."/>
            <person name="Shigeta K."/>
            <person name="Senba T."/>
            <person name="Matsumura K."/>
            <person name="Nakajima Y."/>
            <person name="Mizuno T."/>
            <person name="Morinaga M."/>
            <person name="Sasaki M."/>
            <person name="Togashi T."/>
            <person name="Oyama M."/>
            <person name="Hata H."/>
            <person name="Watanabe M."/>
            <person name="Komatsu T."/>
            <person name="Mizushima-Sugano J."/>
            <person name="Satoh T."/>
            <person name="Shirai Y."/>
            <person name="Takahashi Y."/>
            <person name="Nakagawa K."/>
            <person name="Okumura K."/>
            <person name="Nagase T."/>
            <person name="Nomura N."/>
            <person name="Kikuchi H."/>
            <person name="Masuho Y."/>
            <person name="Yamashita R."/>
            <person name="Nakai K."/>
            <person name="Yada T."/>
            <person name="Nakamura Y."/>
            <person name="Ohara O."/>
            <person name="Isogai T."/>
            <person name="Sugano S."/>
        </authorList>
    </citation>
    <scope>NUCLEOTIDE SEQUENCE [LARGE SCALE MRNA]</scope>
    <source>
        <tissue>Amygdala</tissue>
    </source>
</reference>
<reference key="5">
    <citation type="submission" date="2005-04" db="EMBL/GenBank/DDBJ databases">
        <authorList>
            <person name="Totoki Y."/>
            <person name="Toyoda A."/>
            <person name="Takeda T."/>
            <person name="Sakaki Y."/>
            <person name="Tanaka A."/>
            <person name="Yokoyama S."/>
        </authorList>
    </citation>
    <scope>NUCLEOTIDE SEQUENCE [LARGE SCALE MRNA]</scope>
</reference>
<reference key="6">
    <citation type="submission" date="2005-07" db="EMBL/GenBank/DDBJ databases">
        <authorList>
            <person name="Mural R.J."/>
            <person name="Istrail S."/>
            <person name="Sutton G.G."/>
            <person name="Florea L."/>
            <person name="Halpern A.L."/>
            <person name="Mobarry C.M."/>
            <person name="Lippert R."/>
            <person name="Walenz B."/>
            <person name="Shatkay H."/>
            <person name="Dew I."/>
            <person name="Miller J.R."/>
            <person name="Flanigan M.J."/>
            <person name="Edwards N.J."/>
            <person name="Bolanos R."/>
            <person name="Fasulo D."/>
            <person name="Halldorsson B.V."/>
            <person name="Hannenhalli S."/>
            <person name="Turner R."/>
            <person name="Yooseph S."/>
            <person name="Lu F."/>
            <person name="Nusskern D.R."/>
            <person name="Shue B.C."/>
            <person name="Zheng X.H."/>
            <person name="Zhong F."/>
            <person name="Delcher A.L."/>
            <person name="Huson D.H."/>
            <person name="Kravitz S.A."/>
            <person name="Mouchard L."/>
            <person name="Reinert K."/>
            <person name="Remington K.A."/>
            <person name="Clark A.G."/>
            <person name="Waterman M.S."/>
            <person name="Eichler E.E."/>
            <person name="Adams M.D."/>
            <person name="Hunkapiller M.W."/>
            <person name="Myers E.W."/>
            <person name="Venter J.C."/>
        </authorList>
    </citation>
    <scope>NUCLEOTIDE SEQUENCE [LARGE SCALE GENOMIC DNA]</scope>
</reference>
<reference key="7">
    <citation type="journal article" date="2004" name="Genome Res.">
        <title>The status, quality, and expansion of the NIH full-length cDNA project: the Mammalian Gene Collection (MGC).</title>
        <authorList>
            <consortium name="The MGC Project Team"/>
        </authorList>
    </citation>
    <scope>NUCLEOTIDE SEQUENCE [LARGE SCALE MRNA]</scope>
    <source>
        <tissue>Lymph</tissue>
    </source>
</reference>
<reference key="8">
    <citation type="submission" date="1998-08" db="EMBL/GenBank/DDBJ databases">
        <title>Full-insert sequence of mapped XREF EST.</title>
        <authorList>
            <person name="Barrow I.K.-P."/>
            <person name="Boguski M.S."/>
            <person name="Touchman J.W."/>
            <person name="Spencer F."/>
        </authorList>
    </citation>
    <scope>NUCLEOTIDE SEQUENCE [LARGE SCALE MRNA] OF 292-455</scope>
    <scope>VARIANT VAL-443</scope>
</reference>
<reference key="9">
    <citation type="journal article" date="2009" name="Science">
        <title>Lysine acetylation targets protein complexes and co-regulates major cellular functions.</title>
        <authorList>
            <person name="Choudhary C."/>
            <person name="Kumar C."/>
            <person name="Gnad F."/>
            <person name="Nielsen M.L."/>
            <person name="Rehman M."/>
            <person name="Walther T.C."/>
            <person name="Olsen J.V."/>
            <person name="Mann M."/>
        </authorList>
    </citation>
    <scope>ACETYLATION [LARGE SCALE ANALYSIS] AT LYS-391</scope>
    <scope>IDENTIFICATION BY MASS SPECTROMETRY [LARGE SCALE ANALYSIS]</scope>
</reference>
<reference key="10">
    <citation type="journal article" date="2011" name="BMC Syst. Biol.">
        <title>Initial characterization of the human central proteome.</title>
        <authorList>
            <person name="Burkard T.R."/>
            <person name="Planyavsky M."/>
            <person name="Kaupe I."/>
            <person name="Breitwieser F.P."/>
            <person name="Buerckstuemmer T."/>
            <person name="Bennett K.L."/>
            <person name="Superti-Furga G."/>
            <person name="Colinge J."/>
        </authorList>
    </citation>
    <scope>IDENTIFICATION BY MASS SPECTROMETRY [LARGE SCALE ANALYSIS]</scope>
</reference>
<reference key="11">
    <citation type="journal article" date="2019" name="Cell Rep.">
        <title>Decapping Enzyme NUDT12 Partners with BLMH for Cytoplasmic Surveillance of NAD-Capped RNAs.</title>
        <authorList>
            <person name="Wu H."/>
            <person name="Li L."/>
            <person name="Chen K.M."/>
            <person name="Homolka D."/>
            <person name="Gos P."/>
            <person name="Fleury-Olela F."/>
            <person name="McCarthy A.A."/>
            <person name="Pillai R.S."/>
        </authorList>
    </citation>
    <scope>SUBUNIT</scope>
    <scope>INTERACTION WITH NUDT12</scope>
    <scope>SUBCELLULAR LOCATION</scope>
</reference>
<reference key="12">
    <citation type="journal article" date="1999" name="Structure">
        <title>Crystal structure of human bleomycin hydrolase, a self-compartmentalizing cysteine protease.</title>
        <authorList>
            <person name="O'Farrell P.A."/>
            <person name="Gonzalez F."/>
            <person name="Zheng W."/>
            <person name="Johnston S.A."/>
            <person name="Joshua-Tor L."/>
        </authorList>
    </citation>
    <scope>X-RAY CRYSTALLOGRAPHY (1.85 ANGSTROMS)</scope>
</reference>
<organism>
    <name type="scientific">Homo sapiens</name>
    <name type="common">Human</name>
    <dbReference type="NCBI Taxonomy" id="9606"/>
    <lineage>
        <taxon>Eukaryota</taxon>
        <taxon>Metazoa</taxon>
        <taxon>Chordata</taxon>
        <taxon>Craniata</taxon>
        <taxon>Vertebrata</taxon>
        <taxon>Euteleostomi</taxon>
        <taxon>Mammalia</taxon>
        <taxon>Eutheria</taxon>
        <taxon>Euarchontoglires</taxon>
        <taxon>Primates</taxon>
        <taxon>Haplorrhini</taxon>
        <taxon>Catarrhini</taxon>
        <taxon>Hominidae</taxon>
        <taxon>Homo</taxon>
    </lineage>
</organism>
<comment type="function">
    <text evidence="1">The normal physiological role of BLM hydrolase is unknown, but it catalyzes the inactivation of the antitumor drug BLM (a glycopeptide) by hydrolyzing the carboxamide bond of its B-aminoalaninamide moiety thus protecting normal and malignant cells from BLM toxicity.</text>
</comment>
<comment type="catalytic activity">
    <reaction>
        <text>Inactivates bleomycin B2 (a cytotoxic glycometallopeptide) by hydrolysis of a carboxyamide bond of beta-aminoalanine, but also shows general aminopeptidase activity. The specificity varies somewhat with source, but amino acid arylamides of Met, Leu and Ala are preferred.</text>
        <dbReference type="EC" id="3.4.22.40"/>
    </reaction>
</comment>
<comment type="subunit">
    <text evidence="4">Homohexamer (PubMed:31875550). Interacts with NUDT12 (via ANK repeats) (PubMed:31875550).</text>
</comment>
<comment type="interaction">
    <interactant intactId="EBI-718504">
        <id>Q13867</id>
    </interactant>
    <interactant intactId="EBI-25646567">
        <id>Q06481-5</id>
        <label>APLP2</label>
    </interactant>
    <organismsDiffer>false</organismsDiffer>
    <experiments>3</experiments>
</comment>
<comment type="interaction">
    <interactant intactId="EBI-718504">
        <id>Q13867</id>
    </interactant>
    <interactant intactId="EBI-77613">
        <id>P05067</id>
        <label>APP</label>
    </interactant>
    <organismsDiffer>false</organismsDiffer>
    <experiments>3</experiments>
</comment>
<comment type="interaction">
    <interactant intactId="EBI-718504">
        <id>Q13867</id>
    </interactant>
    <interactant intactId="EBI-302641">
        <id>P05067-4</id>
        <label>APP</label>
    </interactant>
    <organismsDiffer>false</organismsDiffer>
    <experiments>2</experiments>
</comment>
<comment type="interaction">
    <interactant intactId="EBI-718504">
        <id>Q13867</id>
    </interactant>
    <interactant intactId="EBI-718504">
        <id>Q13867</id>
        <label>BLMH</label>
    </interactant>
    <organismsDiffer>false</organismsDiffer>
    <experiments>6</experiments>
</comment>
<comment type="interaction">
    <interactant intactId="EBI-718504">
        <id>Q13867</id>
    </interactant>
    <interactant intactId="EBI-12248206">
        <id>P29466-3</id>
        <label>CASP1</label>
    </interactant>
    <organismsDiffer>false</organismsDiffer>
    <experiments>3</experiments>
</comment>
<comment type="interaction">
    <interactant intactId="EBI-718504">
        <id>Q13867</id>
    </interactant>
    <interactant intactId="EBI-372690">
        <id>Q9UBU7</id>
        <label>DBF4</label>
    </interactant>
    <organismsDiffer>false</organismsDiffer>
    <experiments>3</experiments>
</comment>
<comment type="interaction">
    <interactant intactId="EBI-718504">
        <id>Q13867</id>
    </interactant>
    <interactant intactId="EBI-25833471">
        <id>Q07954-2</id>
        <label>LRP1</label>
    </interactant>
    <organismsDiffer>false</organismsDiffer>
    <experiments>3</experiments>
</comment>
<comment type="interaction">
    <interactant intactId="EBI-718504">
        <id>Q13867</id>
    </interactant>
    <interactant intactId="EBI-741158">
        <id>Q96HA8</id>
        <label>NTAQ1</label>
    </interactant>
    <organismsDiffer>false</organismsDiffer>
    <experiments>4</experiments>
</comment>
<comment type="interaction">
    <interactant intactId="EBI-718504">
        <id>Q13867</id>
    </interactant>
    <interactant intactId="EBI-10230612">
        <id>Q9BQG2</id>
        <label>NUDT12</label>
    </interactant>
    <organismsDiffer>false</organismsDiffer>
    <experiments>11</experiments>
</comment>
<comment type="interaction">
    <interactant intactId="EBI-718504">
        <id>Q13867</id>
    </interactant>
    <interactant intactId="EBI-398874">
        <id>Q9UBU9</id>
        <label>NXF1</label>
    </interactant>
    <organismsDiffer>false</organismsDiffer>
    <experiments>3</experiments>
</comment>
<comment type="interaction">
    <interactant intactId="EBI-718504">
        <id>Q13867</id>
    </interactant>
    <interactant intactId="EBI-11307753">
        <id>O95336</id>
        <label>PGLS</label>
    </interactant>
    <organismsDiffer>false</organismsDiffer>
    <experiments>3</experiments>
</comment>
<comment type="interaction">
    <interactant intactId="EBI-718504">
        <id>Q13867</id>
    </interactant>
    <interactant intactId="EBI-458391">
        <id>P04271</id>
        <label>S100B</label>
    </interactant>
    <organismsDiffer>false</organismsDiffer>
    <experiments>3</experiments>
</comment>
<comment type="interaction">
    <interactant intactId="EBI-718504">
        <id>Q13867</id>
    </interactant>
    <interactant intactId="EBI-25892332">
        <id>P43405-2</id>
        <label>SYK</label>
    </interactant>
    <organismsDiffer>false</organismsDiffer>
    <experiments>3</experiments>
</comment>
<comment type="interaction">
    <interactant intactId="EBI-718504">
        <id>Q13867</id>
    </interactant>
    <interactant intactId="EBI-12076664">
        <id>O14787-2</id>
        <label>TNPO2</label>
    </interactant>
    <organismsDiffer>false</organismsDiffer>
    <experiments>3</experiments>
</comment>
<comment type="interaction">
    <interactant intactId="EBI-718504">
        <id>Q13867</id>
    </interactant>
    <interactant intactId="EBI-1042571">
        <id>Q9Y5L0</id>
        <label>TNPO3</label>
    </interactant>
    <organismsDiffer>false</organismsDiffer>
    <experiments>3</experiments>
</comment>
<comment type="interaction">
    <interactant intactId="EBI-718504">
        <id>Q13867</id>
    </interactant>
    <interactant intactId="EBI-12371725">
        <id>Q96LD4-2</id>
        <label>TRIM47</label>
    </interactant>
    <organismsDiffer>false</organismsDiffer>
    <experiments>3</experiments>
</comment>
<comment type="interaction">
    <interactant intactId="EBI-718504">
        <id>Q13867</id>
    </interactant>
    <interactant intactId="EBI-473284">
        <id>Q9BVJ6</id>
        <label>UTP14A</label>
    </interactant>
    <organismsDiffer>false</organismsDiffer>
    <experiments>3</experiments>
</comment>
<comment type="interaction">
    <interactant intactId="EBI-718504">
        <id>Q13867</id>
    </interactant>
    <interactant intactId="EBI-11141397">
        <id>Q9UBQ0-2</id>
        <label>VPS29</label>
    </interactant>
    <organismsDiffer>false</organismsDiffer>
    <experiments>3</experiments>
</comment>
<comment type="subcellular location">
    <subcellularLocation>
        <location evidence="4">Cytoplasm</location>
    </subcellularLocation>
    <subcellularLocation>
        <location evidence="4">Cytoplasmic granule</location>
    </subcellularLocation>
    <text evidence="4">Co-localizes with NUDT12 in the cytoplasmic granules.</text>
</comment>
<comment type="similarity">
    <text evidence="3">Belongs to the peptidase C1 family.</text>
</comment>
<proteinExistence type="evidence at protein level"/>
<gene>
    <name type="primary">BLMH</name>
</gene>
<evidence type="ECO:0000250" key="1"/>
<evidence type="ECO:0000250" key="2">
    <source>
        <dbReference type="UniProtKB" id="P70645"/>
    </source>
</evidence>
<evidence type="ECO:0000255" key="3">
    <source>
        <dbReference type="PROSITE-ProRule" id="PRU10088"/>
    </source>
</evidence>
<evidence type="ECO:0000269" key="4">
    <source>
    </source>
</evidence>
<evidence type="ECO:0000269" key="5">
    <source>
    </source>
</evidence>
<evidence type="ECO:0000269" key="6">
    <source ref="8"/>
</evidence>
<evidence type="ECO:0007744" key="7">
    <source>
    </source>
</evidence>
<evidence type="ECO:0007829" key="8">
    <source>
        <dbReference type="PDB" id="2CB5"/>
    </source>
</evidence>
<evidence type="ECO:0007829" key="9">
    <source>
        <dbReference type="PDB" id="7V5L"/>
    </source>
</evidence>
<evidence type="ECO:0007829" key="10">
    <source>
        <dbReference type="PDB" id="7V5S"/>
    </source>
</evidence>
<evidence type="ECO:0007829" key="11">
    <source>
        <dbReference type="PDB" id="7V5T"/>
    </source>
</evidence>
<protein>
    <recommendedName>
        <fullName>Bleomycin hydrolase</fullName>
        <shortName>BH</shortName>
        <shortName>BLM hydrolase</shortName>
        <shortName>BMH</shortName>
        <ecNumber>3.4.22.40</ecNumber>
    </recommendedName>
</protein>
<dbReference type="EC" id="3.4.22.40"/>
<dbReference type="EMBL" id="X92106">
    <property type="protein sequence ID" value="CAA63078.1"/>
    <property type="molecule type" value="mRNA"/>
</dbReference>
<dbReference type="EMBL" id="BT007018">
    <property type="protein sequence ID" value="AAP35664.1"/>
    <property type="molecule type" value="mRNA"/>
</dbReference>
<dbReference type="EMBL" id="AK223403">
    <property type="protein sequence ID" value="BAD97123.1"/>
    <property type="molecule type" value="mRNA"/>
</dbReference>
<dbReference type="EMBL" id="AK312896">
    <property type="protein sequence ID" value="BAG35743.1"/>
    <property type="molecule type" value="mRNA"/>
</dbReference>
<dbReference type="EMBL" id="CH471159">
    <property type="protein sequence ID" value="EAW51224.1"/>
    <property type="molecule type" value="Genomic_DNA"/>
</dbReference>
<dbReference type="EMBL" id="BC003616">
    <property type="protein sequence ID" value="AAH03616.1"/>
    <property type="molecule type" value="mRNA"/>
</dbReference>
<dbReference type="EMBL" id="AF091082">
    <property type="protein sequence ID" value="AAC72951.1"/>
    <property type="molecule type" value="mRNA"/>
</dbReference>
<dbReference type="CCDS" id="CCDS32604.1"/>
<dbReference type="RefSeq" id="NP_000377.1">
    <property type="nucleotide sequence ID" value="NM_000386.4"/>
</dbReference>
<dbReference type="PDB" id="1CB5">
    <property type="method" value="X-ray"/>
    <property type="resolution" value="2.59 A"/>
    <property type="chains" value="A/B/C=2-454"/>
</dbReference>
<dbReference type="PDB" id="2CB5">
    <property type="method" value="X-ray"/>
    <property type="resolution" value="1.85 A"/>
    <property type="chains" value="A/B=2-454"/>
</dbReference>
<dbReference type="PDB" id="7V5L">
    <property type="method" value="X-ray"/>
    <property type="resolution" value="1.74 A"/>
    <property type="chains" value="A/B/C/D=1-455"/>
</dbReference>
<dbReference type="PDB" id="7V5S">
    <property type="method" value="X-ray"/>
    <property type="resolution" value="3.02 A"/>
    <property type="chains" value="A=1-455"/>
</dbReference>
<dbReference type="PDB" id="7V5T">
    <property type="method" value="X-ray"/>
    <property type="resolution" value="3.25 A"/>
    <property type="chains" value="A=1-455"/>
</dbReference>
<dbReference type="PDB" id="7XF9">
    <property type="method" value="X-ray"/>
    <property type="resolution" value="3.20 A"/>
    <property type="chains" value="A=1-455"/>
</dbReference>
<dbReference type="PDBsum" id="1CB5"/>
<dbReference type="PDBsum" id="2CB5"/>
<dbReference type="PDBsum" id="7V5L"/>
<dbReference type="PDBsum" id="7V5S"/>
<dbReference type="PDBsum" id="7V5T"/>
<dbReference type="PDBsum" id="7XF9"/>
<dbReference type="SMR" id="Q13867"/>
<dbReference type="BioGRID" id="107111">
    <property type="interactions" value="154"/>
</dbReference>
<dbReference type="FunCoup" id="Q13867">
    <property type="interactions" value="3220"/>
</dbReference>
<dbReference type="IntAct" id="Q13867">
    <property type="interactions" value="79"/>
</dbReference>
<dbReference type="MINT" id="Q13867"/>
<dbReference type="STRING" id="9606.ENSP00000261714"/>
<dbReference type="ChEMBL" id="CHEMBL4295818"/>
<dbReference type="DrugBank" id="DB00290">
    <property type="generic name" value="Bleomycin"/>
</dbReference>
<dbReference type="MEROPS" id="C01.084"/>
<dbReference type="GlyGen" id="Q13867">
    <property type="glycosylation" value="3 sites, 1 O-linked glycan (1 site)"/>
</dbReference>
<dbReference type="iPTMnet" id="Q13867"/>
<dbReference type="PhosphoSitePlus" id="Q13867"/>
<dbReference type="SwissPalm" id="Q13867"/>
<dbReference type="BioMuta" id="BLMH"/>
<dbReference type="jPOST" id="Q13867"/>
<dbReference type="MassIVE" id="Q13867"/>
<dbReference type="PaxDb" id="9606-ENSP00000261714"/>
<dbReference type="PeptideAtlas" id="Q13867"/>
<dbReference type="PRIDE" id="Q13867"/>
<dbReference type="ProteomicsDB" id="59703"/>
<dbReference type="Pumba" id="Q13867"/>
<dbReference type="ABCD" id="Q13867">
    <property type="antibodies" value="4 sequenced antibodies"/>
</dbReference>
<dbReference type="Antibodypedia" id="15119">
    <property type="antibodies" value="266 antibodies from 32 providers"/>
</dbReference>
<dbReference type="DNASU" id="642"/>
<dbReference type="Ensembl" id="ENST00000261714.11">
    <property type="protein sequence ID" value="ENSP00000261714.6"/>
    <property type="gene ID" value="ENSG00000108578.15"/>
</dbReference>
<dbReference type="GeneID" id="642"/>
<dbReference type="KEGG" id="hsa:642"/>
<dbReference type="MANE-Select" id="ENST00000261714.11">
    <property type="protein sequence ID" value="ENSP00000261714.6"/>
    <property type="RefSeq nucleotide sequence ID" value="NM_000386.4"/>
    <property type="RefSeq protein sequence ID" value="NP_000377.1"/>
</dbReference>
<dbReference type="UCSC" id="uc002hez.3">
    <property type="organism name" value="human"/>
</dbReference>
<dbReference type="AGR" id="HGNC:1059"/>
<dbReference type="CTD" id="642"/>
<dbReference type="DisGeNET" id="642"/>
<dbReference type="GeneCards" id="BLMH"/>
<dbReference type="HGNC" id="HGNC:1059">
    <property type="gene designation" value="BLMH"/>
</dbReference>
<dbReference type="HPA" id="ENSG00000108578">
    <property type="expression patterns" value="Tissue enhanced (skin)"/>
</dbReference>
<dbReference type="MalaCards" id="BLMH"/>
<dbReference type="MIM" id="602403">
    <property type="type" value="gene"/>
</dbReference>
<dbReference type="neXtProt" id="NX_Q13867"/>
<dbReference type="OpenTargets" id="ENSG00000108578"/>
<dbReference type="PharmGKB" id="PA25370"/>
<dbReference type="VEuPathDB" id="HostDB:ENSG00000108578"/>
<dbReference type="eggNOG" id="KOG4128">
    <property type="taxonomic scope" value="Eukaryota"/>
</dbReference>
<dbReference type="GeneTree" id="ENSGT00390000001735"/>
<dbReference type="HOGENOM" id="CLU_038600_0_0_1"/>
<dbReference type="InParanoid" id="Q13867"/>
<dbReference type="OMA" id="QSYTFFW"/>
<dbReference type="OrthoDB" id="2666448at2759"/>
<dbReference type="PAN-GO" id="Q13867">
    <property type="GO annotations" value="4 GO annotations based on evolutionary models"/>
</dbReference>
<dbReference type="PhylomeDB" id="Q13867"/>
<dbReference type="TreeFam" id="TF323372"/>
<dbReference type="BRENDA" id="3.4.22.40">
    <property type="organism ID" value="2681"/>
</dbReference>
<dbReference type="PathwayCommons" id="Q13867"/>
<dbReference type="Reactome" id="R-HSA-983168">
    <property type="pathway name" value="Antigen processing: Ubiquitination &amp; Proteasome degradation"/>
</dbReference>
<dbReference type="SABIO-RK" id="Q13867"/>
<dbReference type="SignaLink" id="Q13867"/>
<dbReference type="BioGRID-ORCS" id="642">
    <property type="hits" value="14 hits in 1161 CRISPR screens"/>
</dbReference>
<dbReference type="ChiTaRS" id="BLMH">
    <property type="organism name" value="human"/>
</dbReference>
<dbReference type="EvolutionaryTrace" id="Q13867"/>
<dbReference type="GeneWiki" id="Bleomycin_hydrolase"/>
<dbReference type="GeneWiki" id="BLMH"/>
<dbReference type="GenomeRNAi" id="642"/>
<dbReference type="Pharos" id="Q13867">
    <property type="development level" value="Tbio"/>
</dbReference>
<dbReference type="PRO" id="PR:Q13867"/>
<dbReference type="Proteomes" id="UP000005640">
    <property type="component" value="Chromosome 17"/>
</dbReference>
<dbReference type="RNAct" id="Q13867">
    <property type="molecule type" value="protein"/>
</dbReference>
<dbReference type="Bgee" id="ENSG00000108578">
    <property type="expression patterns" value="Expressed in upper arm skin and 187 other cell types or tissues"/>
</dbReference>
<dbReference type="ExpressionAtlas" id="Q13867">
    <property type="expression patterns" value="baseline and differential"/>
</dbReference>
<dbReference type="GO" id="GO:0005737">
    <property type="term" value="C:cytoplasm"/>
    <property type="evidence" value="ECO:0000314"/>
    <property type="project" value="UniProtKB"/>
</dbReference>
<dbReference type="GO" id="GO:0005829">
    <property type="term" value="C:cytosol"/>
    <property type="evidence" value="ECO:0000304"/>
    <property type="project" value="Reactome"/>
</dbReference>
<dbReference type="GO" id="GO:0070062">
    <property type="term" value="C:extracellular exosome"/>
    <property type="evidence" value="ECO:0007005"/>
    <property type="project" value="UniProtKB"/>
</dbReference>
<dbReference type="GO" id="GO:0005634">
    <property type="term" value="C:nucleus"/>
    <property type="evidence" value="ECO:0007005"/>
    <property type="project" value="UniProtKB"/>
</dbReference>
<dbReference type="GO" id="GO:0004177">
    <property type="term" value="F:aminopeptidase activity"/>
    <property type="evidence" value="ECO:0000269"/>
    <property type="project" value="Reactome"/>
</dbReference>
<dbReference type="GO" id="GO:0004180">
    <property type="term" value="F:carboxypeptidase activity"/>
    <property type="evidence" value="ECO:0000304"/>
    <property type="project" value="ProtInc"/>
</dbReference>
<dbReference type="GO" id="GO:0070005">
    <property type="term" value="F:cysteine-type aminopeptidase activity"/>
    <property type="evidence" value="ECO:0007669"/>
    <property type="project" value="InterPro"/>
</dbReference>
<dbReference type="GO" id="GO:0004197">
    <property type="term" value="F:cysteine-type endopeptidase activity"/>
    <property type="evidence" value="ECO:0000304"/>
    <property type="project" value="ProtInc"/>
</dbReference>
<dbReference type="GO" id="GO:0008234">
    <property type="term" value="F:cysteine-type peptidase activity"/>
    <property type="evidence" value="ECO:0000318"/>
    <property type="project" value="GO_Central"/>
</dbReference>
<dbReference type="GO" id="GO:0042802">
    <property type="term" value="F:identical protein binding"/>
    <property type="evidence" value="ECO:0000353"/>
    <property type="project" value="IntAct"/>
</dbReference>
<dbReference type="GO" id="GO:0043418">
    <property type="term" value="P:homocysteine catabolic process"/>
    <property type="evidence" value="ECO:0000318"/>
    <property type="project" value="GO_Central"/>
</dbReference>
<dbReference type="GO" id="GO:0000209">
    <property type="term" value="P:protein polyubiquitination"/>
    <property type="evidence" value="ECO:0000304"/>
    <property type="project" value="Reactome"/>
</dbReference>
<dbReference type="GO" id="GO:0006508">
    <property type="term" value="P:proteolysis"/>
    <property type="evidence" value="ECO:0000304"/>
    <property type="project" value="ProtInc"/>
</dbReference>
<dbReference type="GO" id="GO:0009636">
    <property type="term" value="P:response to toxic substance"/>
    <property type="evidence" value="ECO:0000318"/>
    <property type="project" value="GO_Central"/>
</dbReference>
<dbReference type="GO" id="GO:0009410">
    <property type="term" value="P:response to xenobiotic stimulus"/>
    <property type="evidence" value="ECO:0007669"/>
    <property type="project" value="Ensembl"/>
</dbReference>
<dbReference type="CDD" id="cd00585">
    <property type="entry name" value="Peptidase_C1B"/>
    <property type="match status" value="1"/>
</dbReference>
<dbReference type="FunFam" id="3.90.70.10:FF:000021">
    <property type="entry name" value="Bleomycin hydrolase"/>
    <property type="match status" value="1"/>
</dbReference>
<dbReference type="Gene3D" id="3.90.70.10">
    <property type="entry name" value="Cysteine proteinases"/>
    <property type="match status" value="1"/>
</dbReference>
<dbReference type="InterPro" id="IPR038765">
    <property type="entry name" value="Papain-like_cys_pep_sf"/>
</dbReference>
<dbReference type="InterPro" id="IPR000169">
    <property type="entry name" value="Pept_cys_AS"/>
</dbReference>
<dbReference type="InterPro" id="IPR004134">
    <property type="entry name" value="Peptidase_C1B"/>
</dbReference>
<dbReference type="PANTHER" id="PTHR10363">
    <property type="entry name" value="BLEOMYCIN HYDROLASE"/>
    <property type="match status" value="1"/>
</dbReference>
<dbReference type="PANTHER" id="PTHR10363:SF2">
    <property type="entry name" value="BLEOMYCIN HYDROLASE"/>
    <property type="match status" value="1"/>
</dbReference>
<dbReference type="Pfam" id="PF03051">
    <property type="entry name" value="Peptidase_C1_2"/>
    <property type="match status" value="1"/>
</dbReference>
<dbReference type="PIRSF" id="PIRSF005700">
    <property type="entry name" value="PepC"/>
    <property type="match status" value="1"/>
</dbReference>
<dbReference type="SUPFAM" id="SSF54001">
    <property type="entry name" value="Cysteine proteinases"/>
    <property type="match status" value="1"/>
</dbReference>
<dbReference type="PROSITE" id="PS00139">
    <property type="entry name" value="THIOL_PROTEASE_CYS"/>
    <property type="match status" value="1"/>
</dbReference>
<name>BLMH_HUMAN</name>
<keyword id="KW-0002">3D-structure</keyword>
<keyword id="KW-0007">Acetylation</keyword>
<keyword id="KW-0963">Cytoplasm</keyword>
<keyword id="KW-0903">Direct protein sequencing</keyword>
<keyword id="KW-0378">Hydrolase</keyword>
<keyword id="KW-0645">Protease</keyword>
<keyword id="KW-1267">Proteomics identification</keyword>
<keyword id="KW-1185">Reference proteome</keyword>
<keyword id="KW-0788">Thiol protease</keyword>